<name>KTHY_LACLM</name>
<organism>
    <name type="scientific">Lactococcus lactis subsp. cremoris (strain MG1363)</name>
    <dbReference type="NCBI Taxonomy" id="416870"/>
    <lineage>
        <taxon>Bacteria</taxon>
        <taxon>Bacillati</taxon>
        <taxon>Bacillota</taxon>
        <taxon>Bacilli</taxon>
        <taxon>Lactobacillales</taxon>
        <taxon>Streptococcaceae</taxon>
        <taxon>Lactococcus</taxon>
        <taxon>Lactococcus cremoris subsp. cremoris</taxon>
    </lineage>
</organism>
<keyword id="KW-0067">ATP-binding</keyword>
<keyword id="KW-0418">Kinase</keyword>
<keyword id="KW-0545">Nucleotide biosynthesis</keyword>
<keyword id="KW-0547">Nucleotide-binding</keyword>
<keyword id="KW-0808">Transferase</keyword>
<comment type="function">
    <text evidence="1">Phosphorylation of dTMP to form dTDP in both de novo and salvage pathways of dTTP synthesis.</text>
</comment>
<comment type="catalytic activity">
    <reaction evidence="1">
        <text>dTMP + ATP = dTDP + ADP</text>
        <dbReference type="Rhea" id="RHEA:13517"/>
        <dbReference type="ChEBI" id="CHEBI:30616"/>
        <dbReference type="ChEBI" id="CHEBI:58369"/>
        <dbReference type="ChEBI" id="CHEBI:63528"/>
        <dbReference type="ChEBI" id="CHEBI:456216"/>
        <dbReference type="EC" id="2.7.4.9"/>
    </reaction>
</comment>
<comment type="similarity">
    <text evidence="1">Belongs to the thymidylate kinase family.</text>
</comment>
<reference key="1">
    <citation type="journal article" date="2007" name="J. Bacteriol.">
        <title>The complete genome sequence of the lactic acid bacterial paradigm Lactococcus lactis subsp. cremoris MG1363.</title>
        <authorList>
            <person name="Wegmann U."/>
            <person name="O'Connell-Motherway M."/>
            <person name="Zomer A."/>
            <person name="Buist G."/>
            <person name="Shearman C."/>
            <person name="Canchaya C."/>
            <person name="Ventura M."/>
            <person name="Goesmann A."/>
            <person name="Gasson M.J."/>
            <person name="Kuipers O.P."/>
            <person name="van Sinderen D."/>
            <person name="Kok J."/>
        </authorList>
    </citation>
    <scope>NUCLEOTIDE SEQUENCE [LARGE SCALE GENOMIC DNA]</scope>
    <source>
        <strain>MG1363</strain>
    </source>
</reference>
<gene>
    <name evidence="1" type="primary">tmk</name>
    <name type="ordered locus">llmg_0415</name>
</gene>
<accession>A2RIC4</accession>
<evidence type="ECO:0000255" key="1">
    <source>
        <dbReference type="HAMAP-Rule" id="MF_00165"/>
    </source>
</evidence>
<proteinExistence type="inferred from homology"/>
<protein>
    <recommendedName>
        <fullName evidence="1">Thymidylate kinase</fullName>
        <ecNumber evidence="1">2.7.4.9</ecNumber>
    </recommendedName>
    <alternativeName>
        <fullName evidence="1">dTMP kinase</fullName>
    </alternativeName>
</protein>
<dbReference type="EC" id="2.7.4.9" evidence="1"/>
<dbReference type="EMBL" id="AM406671">
    <property type="protein sequence ID" value="CAL97019.1"/>
    <property type="molecule type" value="Genomic_DNA"/>
</dbReference>
<dbReference type="RefSeq" id="WP_011834462.1">
    <property type="nucleotide sequence ID" value="NC_009004.1"/>
</dbReference>
<dbReference type="SMR" id="A2RIC4"/>
<dbReference type="STRING" id="416870.llmg_0415"/>
<dbReference type="KEGG" id="llm:llmg_0415"/>
<dbReference type="eggNOG" id="COG0125">
    <property type="taxonomic scope" value="Bacteria"/>
</dbReference>
<dbReference type="HOGENOM" id="CLU_049131_0_2_9"/>
<dbReference type="OrthoDB" id="9774907at2"/>
<dbReference type="PhylomeDB" id="A2RIC4"/>
<dbReference type="Proteomes" id="UP000000364">
    <property type="component" value="Chromosome"/>
</dbReference>
<dbReference type="GO" id="GO:0005829">
    <property type="term" value="C:cytosol"/>
    <property type="evidence" value="ECO:0007669"/>
    <property type="project" value="TreeGrafter"/>
</dbReference>
<dbReference type="GO" id="GO:0005524">
    <property type="term" value="F:ATP binding"/>
    <property type="evidence" value="ECO:0007669"/>
    <property type="project" value="UniProtKB-UniRule"/>
</dbReference>
<dbReference type="GO" id="GO:0004798">
    <property type="term" value="F:dTMP kinase activity"/>
    <property type="evidence" value="ECO:0007669"/>
    <property type="project" value="UniProtKB-UniRule"/>
</dbReference>
<dbReference type="GO" id="GO:0006233">
    <property type="term" value="P:dTDP biosynthetic process"/>
    <property type="evidence" value="ECO:0007669"/>
    <property type="project" value="InterPro"/>
</dbReference>
<dbReference type="GO" id="GO:0006235">
    <property type="term" value="P:dTTP biosynthetic process"/>
    <property type="evidence" value="ECO:0007669"/>
    <property type="project" value="UniProtKB-UniRule"/>
</dbReference>
<dbReference type="GO" id="GO:0006227">
    <property type="term" value="P:dUDP biosynthetic process"/>
    <property type="evidence" value="ECO:0007669"/>
    <property type="project" value="TreeGrafter"/>
</dbReference>
<dbReference type="CDD" id="cd01672">
    <property type="entry name" value="TMPK"/>
    <property type="match status" value="1"/>
</dbReference>
<dbReference type="FunFam" id="3.40.50.300:FF:000225">
    <property type="entry name" value="Thymidylate kinase"/>
    <property type="match status" value="1"/>
</dbReference>
<dbReference type="Gene3D" id="3.40.50.300">
    <property type="entry name" value="P-loop containing nucleotide triphosphate hydrolases"/>
    <property type="match status" value="1"/>
</dbReference>
<dbReference type="HAMAP" id="MF_00165">
    <property type="entry name" value="Thymidylate_kinase"/>
    <property type="match status" value="1"/>
</dbReference>
<dbReference type="InterPro" id="IPR027417">
    <property type="entry name" value="P-loop_NTPase"/>
</dbReference>
<dbReference type="InterPro" id="IPR039430">
    <property type="entry name" value="Thymidylate_kin-like_dom"/>
</dbReference>
<dbReference type="InterPro" id="IPR018095">
    <property type="entry name" value="Thymidylate_kin_CS"/>
</dbReference>
<dbReference type="InterPro" id="IPR018094">
    <property type="entry name" value="Thymidylate_kinase"/>
</dbReference>
<dbReference type="NCBIfam" id="TIGR00041">
    <property type="entry name" value="DTMP_kinase"/>
    <property type="match status" value="1"/>
</dbReference>
<dbReference type="PANTHER" id="PTHR10344">
    <property type="entry name" value="THYMIDYLATE KINASE"/>
    <property type="match status" value="1"/>
</dbReference>
<dbReference type="PANTHER" id="PTHR10344:SF4">
    <property type="entry name" value="UMP-CMP KINASE 2, MITOCHONDRIAL"/>
    <property type="match status" value="1"/>
</dbReference>
<dbReference type="Pfam" id="PF02223">
    <property type="entry name" value="Thymidylate_kin"/>
    <property type="match status" value="1"/>
</dbReference>
<dbReference type="SUPFAM" id="SSF52540">
    <property type="entry name" value="P-loop containing nucleoside triphosphate hydrolases"/>
    <property type="match status" value="1"/>
</dbReference>
<dbReference type="PROSITE" id="PS01331">
    <property type="entry name" value="THYMIDYLATE_KINASE"/>
    <property type="match status" value="1"/>
</dbReference>
<sequence length="211" mass="23973">MNGILISLEGPDGAGKTTVLQEILPEIQKMKREVVPTREPGGVRVAEEIRQIILDPKNTEIDSKTELMLFAAARRLHMQEKMLPALRAGKVVIVDRFIDSSVAYQGYGRDLGVEVVDWLNYFATDGLKPDLTLYFDIDTDVALERIMKNRADEVNRLDLERAEMHRKVREGYLEIVAKEPGRFVKIDASQSLEKVVADTLEVLKKRFVSEF</sequence>
<feature type="chain" id="PRO_1000023210" description="Thymidylate kinase">
    <location>
        <begin position="1"/>
        <end position="211"/>
    </location>
</feature>
<feature type="binding site" evidence="1">
    <location>
        <begin position="10"/>
        <end position="17"/>
    </location>
    <ligand>
        <name>ATP</name>
        <dbReference type="ChEBI" id="CHEBI:30616"/>
    </ligand>
</feature>